<reference key="1">
    <citation type="journal article" date="2007" name="Microbiology">
        <title>Comparative analysis of the Corynebacterium glutamicum group and complete genome sequence of strain R.</title>
        <authorList>
            <person name="Yukawa H."/>
            <person name="Omumasaba C.A."/>
            <person name="Nonaka H."/>
            <person name="Kos P."/>
            <person name="Okai N."/>
            <person name="Suzuki N."/>
            <person name="Suda M."/>
            <person name="Tsuge Y."/>
            <person name="Watanabe J."/>
            <person name="Ikeda Y."/>
            <person name="Vertes A.A."/>
            <person name="Inui M."/>
        </authorList>
    </citation>
    <scope>NUCLEOTIDE SEQUENCE [LARGE SCALE GENOMIC DNA]</scope>
    <source>
        <strain>R</strain>
    </source>
</reference>
<name>DXS_CORGB</name>
<comment type="function">
    <text evidence="1">Catalyzes the acyloin condensation reaction between C atoms 2 and 3 of pyruvate and glyceraldehyde 3-phosphate to yield 1-deoxy-D-xylulose-5-phosphate (DXP).</text>
</comment>
<comment type="catalytic activity">
    <reaction evidence="1">
        <text>D-glyceraldehyde 3-phosphate + pyruvate + H(+) = 1-deoxy-D-xylulose 5-phosphate + CO2</text>
        <dbReference type="Rhea" id="RHEA:12605"/>
        <dbReference type="ChEBI" id="CHEBI:15361"/>
        <dbReference type="ChEBI" id="CHEBI:15378"/>
        <dbReference type="ChEBI" id="CHEBI:16526"/>
        <dbReference type="ChEBI" id="CHEBI:57792"/>
        <dbReference type="ChEBI" id="CHEBI:59776"/>
        <dbReference type="EC" id="2.2.1.7"/>
    </reaction>
</comment>
<comment type="cofactor">
    <cofactor evidence="1">
        <name>Mg(2+)</name>
        <dbReference type="ChEBI" id="CHEBI:18420"/>
    </cofactor>
    <text evidence="1">Binds 1 Mg(2+) ion per subunit.</text>
</comment>
<comment type="cofactor">
    <cofactor evidence="1">
        <name>thiamine diphosphate</name>
        <dbReference type="ChEBI" id="CHEBI:58937"/>
    </cofactor>
    <text evidence="1">Binds 1 thiamine pyrophosphate per subunit.</text>
</comment>
<comment type="pathway">
    <text evidence="1">Metabolic intermediate biosynthesis; 1-deoxy-D-xylulose 5-phosphate biosynthesis; 1-deoxy-D-xylulose 5-phosphate from D-glyceraldehyde 3-phosphate and pyruvate: step 1/1.</text>
</comment>
<comment type="subunit">
    <text evidence="1">Homodimer.</text>
</comment>
<comment type="similarity">
    <text evidence="1">Belongs to the transketolase family. DXPS subfamily.</text>
</comment>
<gene>
    <name evidence="1" type="primary">dxs</name>
    <name type="ordered locus">cgR_1731</name>
</gene>
<sequence>MGILNSISTPADLKALNDEDLDALAKEIRTFLVDKVAATGGHLGPNLGVVELTIGLHRVFDSPQDPIIFDTSHQSYVHKILTGRAKDFDSLRQKDGLSGYTCRAESEHDWTESSHASAALSYADGLSKAKQLDGDTTHSVVAVVGDGALTGGMCWEALNNIAAGKDRKVVVVVNDNGRSYSPTIGGFAENLAGLRMQPFYDRFMEKGKTSLKSMGWVGERTFEALHAFKEGVKSTVIPTEMFPELGMKYVGPVDGHNQKAVDNALKYAHDYDGPIIVHMVTEKGRGYAPAEQDLDELMHSTGVIDPLTGAPKSASKPGWTSVFSDELVKIGAQNENVVAITAAMAGPTGLSKFEANFPNRFFDVGIAEQHAVTSAAGLALGGKHPVVAIYSTFLNRAFDQLLMDVGMLNQPVTLVLDRSGVTGSDGASHNGVWDMALTSIVPGVQVAAPRDEDSLRELLNEAISIDDGPTVVRFPKGDLPTPIVAIDTLEDGVDVLAYEDATEDDAPSVLIVAVGERATVALEVASRITQHGVNVTVVDPRWIVPIPQSLVALSDDHDLVITIEDGVIHGGVGSLLSDALNASEVDTPRRQIAVPQKYLDHASRSEVFADYGLDADGIETTVVGWLDSLFGE</sequence>
<dbReference type="EC" id="2.2.1.7" evidence="1"/>
<dbReference type="EMBL" id="AP009044">
    <property type="protein sequence ID" value="BAF54725.1"/>
    <property type="molecule type" value="Genomic_DNA"/>
</dbReference>
<dbReference type="RefSeq" id="WP_011897357.1">
    <property type="nucleotide sequence ID" value="NC_009342.1"/>
</dbReference>
<dbReference type="SMR" id="A4QEQ9"/>
<dbReference type="KEGG" id="cgt:cgR_1731"/>
<dbReference type="HOGENOM" id="CLU_009227_1_4_11"/>
<dbReference type="PhylomeDB" id="A4QEQ9"/>
<dbReference type="UniPathway" id="UPA00064">
    <property type="reaction ID" value="UER00091"/>
</dbReference>
<dbReference type="Proteomes" id="UP000006698">
    <property type="component" value="Chromosome"/>
</dbReference>
<dbReference type="GO" id="GO:0005829">
    <property type="term" value="C:cytosol"/>
    <property type="evidence" value="ECO:0007669"/>
    <property type="project" value="TreeGrafter"/>
</dbReference>
<dbReference type="GO" id="GO:0008661">
    <property type="term" value="F:1-deoxy-D-xylulose-5-phosphate synthase activity"/>
    <property type="evidence" value="ECO:0007669"/>
    <property type="project" value="UniProtKB-UniRule"/>
</dbReference>
<dbReference type="GO" id="GO:0000287">
    <property type="term" value="F:magnesium ion binding"/>
    <property type="evidence" value="ECO:0007669"/>
    <property type="project" value="UniProtKB-UniRule"/>
</dbReference>
<dbReference type="GO" id="GO:0030976">
    <property type="term" value="F:thiamine pyrophosphate binding"/>
    <property type="evidence" value="ECO:0007669"/>
    <property type="project" value="UniProtKB-UniRule"/>
</dbReference>
<dbReference type="GO" id="GO:0052865">
    <property type="term" value="P:1-deoxy-D-xylulose 5-phosphate biosynthetic process"/>
    <property type="evidence" value="ECO:0007669"/>
    <property type="project" value="UniProtKB-UniPathway"/>
</dbReference>
<dbReference type="GO" id="GO:0019288">
    <property type="term" value="P:isopentenyl diphosphate biosynthetic process, methylerythritol 4-phosphate pathway"/>
    <property type="evidence" value="ECO:0007669"/>
    <property type="project" value="TreeGrafter"/>
</dbReference>
<dbReference type="GO" id="GO:0016114">
    <property type="term" value="P:terpenoid biosynthetic process"/>
    <property type="evidence" value="ECO:0007669"/>
    <property type="project" value="UniProtKB-UniRule"/>
</dbReference>
<dbReference type="GO" id="GO:0009228">
    <property type="term" value="P:thiamine biosynthetic process"/>
    <property type="evidence" value="ECO:0007669"/>
    <property type="project" value="UniProtKB-UniRule"/>
</dbReference>
<dbReference type="CDD" id="cd02007">
    <property type="entry name" value="TPP_DXS"/>
    <property type="match status" value="1"/>
</dbReference>
<dbReference type="CDD" id="cd07033">
    <property type="entry name" value="TPP_PYR_DXS_TK_like"/>
    <property type="match status" value="1"/>
</dbReference>
<dbReference type="FunFam" id="3.40.50.970:FF:000005">
    <property type="entry name" value="1-deoxy-D-xylulose-5-phosphate synthase"/>
    <property type="match status" value="1"/>
</dbReference>
<dbReference type="Gene3D" id="3.40.50.920">
    <property type="match status" value="1"/>
</dbReference>
<dbReference type="Gene3D" id="3.40.50.970">
    <property type="match status" value="2"/>
</dbReference>
<dbReference type="HAMAP" id="MF_00315">
    <property type="entry name" value="DXP_synth"/>
    <property type="match status" value="1"/>
</dbReference>
<dbReference type="InterPro" id="IPR005477">
    <property type="entry name" value="Dxylulose-5-P_synthase"/>
</dbReference>
<dbReference type="InterPro" id="IPR029061">
    <property type="entry name" value="THDP-binding"/>
</dbReference>
<dbReference type="InterPro" id="IPR009014">
    <property type="entry name" value="Transketo_C/PFOR_II"/>
</dbReference>
<dbReference type="InterPro" id="IPR005475">
    <property type="entry name" value="Transketolase-like_Pyr-bd"/>
</dbReference>
<dbReference type="InterPro" id="IPR020826">
    <property type="entry name" value="Transketolase_BS"/>
</dbReference>
<dbReference type="InterPro" id="IPR033248">
    <property type="entry name" value="Transketolase_C"/>
</dbReference>
<dbReference type="InterPro" id="IPR049557">
    <property type="entry name" value="Transketolase_CS"/>
</dbReference>
<dbReference type="NCBIfam" id="TIGR00204">
    <property type="entry name" value="dxs"/>
    <property type="match status" value="1"/>
</dbReference>
<dbReference type="NCBIfam" id="NF003933">
    <property type="entry name" value="PRK05444.2-2"/>
    <property type="match status" value="1"/>
</dbReference>
<dbReference type="PANTHER" id="PTHR43322">
    <property type="entry name" value="1-D-DEOXYXYLULOSE 5-PHOSPHATE SYNTHASE-RELATED"/>
    <property type="match status" value="1"/>
</dbReference>
<dbReference type="PANTHER" id="PTHR43322:SF5">
    <property type="entry name" value="1-DEOXY-D-XYLULOSE-5-PHOSPHATE SYNTHASE, CHLOROPLASTIC"/>
    <property type="match status" value="1"/>
</dbReference>
<dbReference type="Pfam" id="PF13292">
    <property type="entry name" value="DXP_synthase_N"/>
    <property type="match status" value="1"/>
</dbReference>
<dbReference type="Pfam" id="PF02779">
    <property type="entry name" value="Transket_pyr"/>
    <property type="match status" value="1"/>
</dbReference>
<dbReference type="Pfam" id="PF02780">
    <property type="entry name" value="Transketolase_C"/>
    <property type="match status" value="1"/>
</dbReference>
<dbReference type="SMART" id="SM00861">
    <property type="entry name" value="Transket_pyr"/>
    <property type="match status" value="1"/>
</dbReference>
<dbReference type="SUPFAM" id="SSF52518">
    <property type="entry name" value="Thiamin diphosphate-binding fold (THDP-binding)"/>
    <property type="match status" value="1"/>
</dbReference>
<dbReference type="SUPFAM" id="SSF52922">
    <property type="entry name" value="TK C-terminal domain-like"/>
    <property type="match status" value="1"/>
</dbReference>
<dbReference type="PROSITE" id="PS00801">
    <property type="entry name" value="TRANSKETOLASE_1"/>
    <property type="match status" value="1"/>
</dbReference>
<dbReference type="PROSITE" id="PS00802">
    <property type="entry name" value="TRANSKETOLASE_2"/>
    <property type="match status" value="1"/>
</dbReference>
<accession>A4QEQ9</accession>
<organism>
    <name type="scientific">Corynebacterium glutamicum (strain R)</name>
    <dbReference type="NCBI Taxonomy" id="340322"/>
    <lineage>
        <taxon>Bacteria</taxon>
        <taxon>Bacillati</taxon>
        <taxon>Actinomycetota</taxon>
        <taxon>Actinomycetes</taxon>
        <taxon>Mycobacteriales</taxon>
        <taxon>Corynebacteriaceae</taxon>
        <taxon>Corynebacterium</taxon>
    </lineage>
</organism>
<evidence type="ECO:0000255" key="1">
    <source>
        <dbReference type="HAMAP-Rule" id="MF_00315"/>
    </source>
</evidence>
<protein>
    <recommendedName>
        <fullName evidence="1">1-deoxy-D-xylulose-5-phosphate synthase</fullName>
        <ecNumber evidence="1">2.2.1.7</ecNumber>
    </recommendedName>
    <alternativeName>
        <fullName evidence="1">1-deoxyxylulose-5-phosphate synthase</fullName>
        <shortName evidence="1">DXP synthase</shortName>
        <shortName evidence="1">DXPS</shortName>
    </alternativeName>
</protein>
<keyword id="KW-0414">Isoprene biosynthesis</keyword>
<keyword id="KW-0460">Magnesium</keyword>
<keyword id="KW-0479">Metal-binding</keyword>
<keyword id="KW-0784">Thiamine biosynthesis</keyword>
<keyword id="KW-0786">Thiamine pyrophosphate</keyword>
<keyword id="KW-0808">Transferase</keyword>
<proteinExistence type="inferred from homology"/>
<feature type="chain" id="PRO_1000019020" description="1-deoxy-D-xylulose-5-phosphate synthase">
    <location>
        <begin position="1"/>
        <end position="632"/>
    </location>
</feature>
<feature type="binding site" evidence="1">
    <location>
        <position position="73"/>
    </location>
    <ligand>
        <name>thiamine diphosphate</name>
        <dbReference type="ChEBI" id="CHEBI:58937"/>
    </ligand>
</feature>
<feature type="binding site" evidence="1">
    <location>
        <begin position="114"/>
        <end position="116"/>
    </location>
    <ligand>
        <name>thiamine diphosphate</name>
        <dbReference type="ChEBI" id="CHEBI:58937"/>
    </ligand>
</feature>
<feature type="binding site" evidence="1">
    <location>
        <position position="146"/>
    </location>
    <ligand>
        <name>Mg(2+)</name>
        <dbReference type="ChEBI" id="CHEBI:18420"/>
    </ligand>
</feature>
<feature type="binding site" evidence="1">
    <location>
        <begin position="147"/>
        <end position="148"/>
    </location>
    <ligand>
        <name>thiamine diphosphate</name>
        <dbReference type="ChEBI" id="CHEBI:58937"/>
    </ligand>
</feature>
<feature type="binding site" evidence="1">
    <location>
        <position position="176"/>
    </location>
    <ligand>
        <name>Mg(2+)</name>
        <dbReference type="ChEBI" id="CHEBI:18420"/>
    </ligand>
</feature>
<feature type="binding site" evidence="1">
    <location>
        <position position="176"/>
    </location>
    <ligand>
        <name>thiamine diphosphate</name>
        <dbReference type="ChEBI" id="CHEBI:58937"/>
    </ligand>
</feature>
<feature type="binding site" evidence="1">
    <location>
        <position position="287"/>
    </location>
    <ligand>
        <name>thiamine diphosphate</name>
        <dbReference type="ChEBI" id="CHEBI:58937"/>
    </ligand>
</feature>
<feature type="binding site" evidence="1">
    <location>
        <position position="368"/>
    </location>
    <ligand>
        <name>thiamine diphosphate</name>
        <dbReference type="ChEBI" id="CHEBI:58937"/>
    </ligand>
</feature>